<organism>
    <name type="scientific">Burkholderia cenocepacia (strain HI2424)</name>
    <dbReference type="NCBI Taxonomy" id="331272"/>
    <lineage>
        <taxon>Bacteria</taxon>
        <taxon>Pseudomonadati</taxon>
        <taxon>Pseudomonadota</taxon>
        <taxon>Betaproteobacteria</taxon>
        <taxon>Burkholderiales</taxon>
        <taxon>Burkholderiaceae</taxon>
        <taxon>Burkholderia</taxon>
        <taxon>Burkholderia cepacia complex</taxon>
    </lineage>
</organism>
<sequence length="340" mass="37367">MLDPRARTLLKTLIERYIADGQPVGSRTLSRYSGLELSPATIRNVMSDLEELGLVSSPHTSAGRVPTPRGYRLFVDTMLTVEAPIDAEAVARQVQNTLQAGEPQQRVVAAAASVLSNLSQFAGVVLTPRRSHVFKQIEFMRLSDKRILLIIVTPEGDVQNRMLATPRDYSPSQLTEASNYINAHFAGLSFDEVRRRLRDEIDQLRGDMTTLMHAAVTASTEVPDTEDTVLISGERNLLEVADLSSDMARLRKLFDVFDQKTGLLQLLDVSSHAQGVQIFIGGESTLVPIEEMSVVTAPYEVNGQIVGTLGVIGPTRMAYNRVIPIVDITARLLSLTLSQQ</sequence>
<feature type="chain" id="PRO_1000010383" description="Heat-inducible transcription repressor HrcA">
    <location>
        <begin position="1"/>
        <end position="340"/>
    </location>
</feature>
<keyword id="KW-0678">Repressor</keyword>
<keyword id="KW-0346">Stress response</keyword>
<keyword id="KW-0804">Transcription</keyword>
<keyword id="KW-0805">Transcription regulation</keyword>
<gene>
    <name evidence="1" type="primary">hrcA</name>
    <name type="ordered locus">Bcen2424_0745</name>
</gene>
<accession>A0K4S1</accession>
<evidence type="ECO:0000255" key="1">
    <source>
        <dbReference type="HAMAP-Rule" id="MF_00081"/>
    </source>
</evidence>
<protein>
    <recommendedName>
        <fullName evidence="1">Heat-inducible transcription repressor HrcA</fullName>
    </recommendedName>
</protein>
<reference key="1">
    <citation type="submission" date="2006-08" db="EMBL/GenBank/DDBJ databases">
        <title>Complete sequence of chromosome 1 of Burkholderia cenocepacia HI2424.</title>
        <authorList>
            <person name="Copeland A."/>
            <person name="Lucas S."/>
            <person name="Lapidus A."/>
            <person name="Barry K."/>
            <person name="Detter J.C."/>
            <person name="Glavina del Rio T."/>
            <person name="Hammon N."/>
            <person name="Israni S."/>
            <person name="Pitluck S."/>
            <person name="Chain P."/>
            <person name="Malfatti S."/>
            <person name="Shin M."/>
            <person name="Vergez L."/>
            <person name="Schmutz J."/>
            <person name="Larimer F."/>
            <person name="Land M."/>
            <person name="Hauser L."/>
            <person name="Kyrpides N."/>
            <person name="Kim E."/>
            <person name="LiPuma J.J."/>
            <person name="Gonzalez C.F."/>
            <person name="Konstantinidis K."/>
            <person name="Tiedje J.M."/>
            <person name="Richardson P."/>
        </authorList>
    </citation>
    <scope>NUCLEOTIDE SEQUENCE [LARGE SCALE GENOMIC DNA]</scope>
    <source>
        <strain>HI2424</strain>
    </source>
</reference>
<proteinExistence type="inferred from homology"/>
<comment type="function">
    <text evidence="1">Negative regulator of class I heat shock genes (grpE-dnaK-dnaJ and groELS operons). Prevents heat-shock induction of these operons.</text>
</comment>
<comment type="similarity">
    <text evidence="1">Belongs to the HrcA family.</text>
</comment>
<name>HRCA_BURCH</name>
<dbReference type="EMBL" id="CP000458">
    <property type="protein sequence ID" value="ABK07498.1"/>
    <property type="molecule type" value="Genomic_DNA"/>
</dbReference>
<dbReference type="RefSeq" id="WP_011544637.1">
    <property type="nucleotide sequence ID" value="NC_008542.1"/>
</dbReference>
<dbReference type="SMR" id="A0K4S1"/>
<dbReference type="GeneID" id="93143103"/>
<dbReference type="KEGG" id="bch:Bcen2424_0745"/>
<dbReference type="HOGENOM" id="CLU_050019_0_0_4"/>
<dbReference type="GO" id="GO:0003677">
    <property type="term" value="F:DNA binding"/>
    <property type="evidence" value="ECO:0007669"/>
    <property type="project" value="InterPro"/>
</dbReference>
<dbReference type="GO" id="GO:0045892">
    <property type="term" value="P:negative regulation of DNA-templated transcription"/>
    <property type="evidence" value="ECO:0007669"/>
    <property type="project" value="UniProtKB-UniRule"/>
</dbReference>
<dbReference type="Gene3D" id="3.30.450.40">
    <property type="match status" value="1"/>
</dbReference>
<dbReference type="Gene3D" id="3.30.390.60">
    <property type="entry name" value="Heat-inducible transcription repressor hrca homolog, domain 3"/>
    <property type="match status" value="1"/>
</dbReference>
<dbReference type="Gene3D" id="1.10.10.10">
    <property type="entry name" value="Winged helix-like DNA-binding domain superfamily/Winged helix DNA-binding domain"/>
    <property type="match status" value="1"/>
</dbReference>
<dbReference type="HAMAP" id="MF_00081">
    <property type="entry name" value="HrcA"/>
    <property type="match status" value="1"/>
</dbReference>
<dbReference type="InterPro" id="IPR029016">
    <property type="entry name" value="GAF-like_dom_sf"/>
</dbReference>
<dbReference type="InterPro" id="IPR002571">
    <property type="entry name" value="HrcA"/>
</dbReference>
<dbReference type="InterPro" id="IPR021153">
    <property type="entry name" value="HrcA_C"/>
</dbReference>
<dbReference type="InterPro" id="IPR036388">
    <property type="entry name" value="WH-like_DNA-bd_sf"/>
</dbReference>
<dbReference type="InterPro" id="IPR036390">
    <property type="entry name" value="WH_DNA-bd_sf"/>
</dbReference>
<dbReference type="InterPro" id="IPR005104">
    <property type="entry name" value="WHTH_HrcA_DNA-bd"/>
</dbReference>
<dbReference type="InterPro" id="IPR023120">
    <property type="entry name" value="WHTH_transcript_rep_HrcA_IDD"/>
</dbReference>
<dbReference type="NCBIfam" id="TIGR00331">
    <property type="entry name" value="hrcA"/>
    <property type="match status" value="1"/>
</dbReference>
<dbReference type="PANTHER" id="PTHR34824">
    <property type="entry name" value="HEAT-INDUCIBLE TRANSCRIPTION REPRESSOR HRCA"/>
    <property type="match status" value="1"/>
</dbReference>
<dbReference type="PANTHER" id="PTHR34824:SF1">
    <property type="entry name" value="HEAT-INDUCIBLE TRANSCRIPTION REPRESSOR HRCA"/>
    <property type="match status" value="1"/>
</dbReference>
<dbReference type="Pfam" id="PF01628">
    <property type="entry name" value="HrcA"/>
    <property type="match status" value="1"/>
</dbReference>
<dbReference type="Pfam" id="PF03444">
    <property type="entry name" value="HrcA_DNA-bdg"/>
    <property type="match status" value="1"/>
</dbReference>
<dbReference type="PIRSF" id="PIRSF005485">
    <property type="entry name" value="HrcA"/>
    <property type="match status" value="1"/>
</dbReference>
<dbReference type="SUPFAM" id="SSF55781">
    <property type="entry name" value="GAF domain-like"/>
    <property type="match status" value="1"/>
</dbReference>
<dbReference type="SUPFAM" id="SSF46785">
    <property type="entry name" value="Winged helix' DNA-binding domain"/>
    <property type="match status" value="1"/>
</dbReference>